<feature type="chain" id="PRO_0000244140" description="Ribosome maturation factor RimM">
    <location>
        <begin position="1"/>
        <end position="173"/>
    </location>
</feature>
<feature type="domain" description="PRC barrel" evidence="1">
    <location>
        <begin position="92"/>
        <end position="165"/>
    </location>
</feature>
<reference key="1">
    <citation type="journal article" date="2006" name="Appl. Environ. Microbiol.">
        <title>Genome sequence of the chemolithoautotrophic nitrite-oxidizing bacterium Nitrobacter winogradskyi Nb-255.</title>
        <authorList>
            <person name="Starkenburg S.R."/>
            <person name="Chain P.S.G."/>
            <person name="Sayavedra-Soto L.A."/>
            <person name="Hauser L."/>
            <person name="Land M.L."/>
            <person name="Larimer F.W."/>
            <person name="Malfatti S.A."/>
            <person name="Klotz M.G."/>
            <person name="Bottomley P.J."/>
            <person name="Arp D.J."/>
            <person name="Hickey W.J."/>
        </authorList>
    </citation>
    <scope>NUCLEOTIDE SEQUENCE [LARGE SCALE GENOMIC DNA]</scope>
    <source>
        <strain>ATCC 25391 / DSM 10237 / CIP 104748 / NCIMB 11846 / Nb-255</strain>
    </source>
</reference>
<proteinExistence type="inferred from homology"/>
<sequence>MTARVCVARIGAAHGLRGEVRLWTFTEDPMSVTRYGPLSTKDGARQLEVSHARAASDHLIATLTGVTTREEAERLNGTELYVARDKLPETDEGEFYHADLIGLAAFDAAGTALGTVAAIHNFGAGDIIEIAPARGPTLMLPFTDAVVPIVDIAGGRVVIEAPAEIDGEEPNSV</sequence>
<keyword id="KW-0143">Chaperone</keyword>
<keyword id="KW-0963">Cytoplasm</keyword>
<keyword id="KW-1185">Reference proteome</keyword>
<keyword id="KW-0690">Ribosome biogenesis</keyword>
<keyword id="KW-0698">rRNA processing</keyword>
<organism>
    <name type="scientific">Nitrobacter winogradskyi (strain ATCC 25391 / DSM 10237 / CIP 104748 / NCIMB 11846 / Nb-255)</name>
    <dbReference type="NCBI Taxonomy" id="323098"/>
    <lineage>
        <taxon>Bacteria</taxon>
        <taxon>Pseudomonadati</taxon>
        <taxon>Pseudomonadota</taxon>
        <taxon>Alphaproteobacteria</taxon>
        <taxon>Hyphomicrobiales</taxon>
        <taxon>Nitrobacteraceae</taxon>
        <taxon>Nitrobacter</taxon>
    </lineage>
</organism>
<dbReference type="EMBL" id="CP000115">
    <property type="protein sequence ID" value="ABA06034.1"/>
    <property type="molecule type" value="Genomic_DNA"/>
</dbReference>
<dbReference type="RefSeq" id="WP_011315979.1">
    <property type="nucleotide sequence ID" value="NC_007406.1"/>
</dbReference>
<dbReference type="SMR" id="Q3SNV7"/>
<dbReference type="STRING" id="323098.Nwi_2781"/>
<dbReference type="KEGG" id="nwi:Nwi_2781"/>
<dbReference type="eggNOG" id="COG0806">
    <property type="taxonomic scope" value="Bacteria"/>
</dbReference>
<dbReference type="HOGENOM" id="CLU_077636_0_1_5"/>
<dbReference type="OrthoDB" id="9788191at2"/>
<dbReference type="Proteomes" id="UP000002531">
    <property type="component" value="Chromosome"/>
</dbReference>
<dbReference type="GO" id="GO:0005737">
    <property type="term" value="C:cytoplasm"/>
    <property type="evidence" value="ECO:0007669"/>
    <property type="project" value="UniProtKB-SubCell"/>
</dbReference>
<dbReference type="GO" id="GO:0005840">
    <property type="term" value="C:ribosome"/>
    <property type="evidence" value="ECO:0007669"/>
    <property type="project" value="InterPro"/>
</dbReference>
<dbReference type="GO" id="GO:0043022">
    <property type="term" value="F:ribosome binding"/>
    <property type="evidence" value="ECO:0007669"/>
    <property type="project" value="InterPro"/>
</dbReference>
<dbReference type="GO" id="GO:0042274">
    <property type="term" value="P:ribosomal small subunit biogenesis"/>
    <property type="evidence" value="ECO:0007669"/>
    <property type="project" value="UniProtKB-UniRule"/>
</dbReference>
<dbReference type="GO" id="GO:0006364">
    <property type="term" value="P:rRNA processing"/>
    <property type="evidence" value="ECO:0007669"/>
    <property type="project" value="UniProtKB-UniRule"/>
</dbReference>
<dbReference type="Gene3D" id="2.30.30.240">
    <property type="entry name" value="PRC-barrel domain"/>
    <property type="match status" value="1"/>
</dbReference>
<dbReference type="Gene3D" id="2.40.30.60">
    <property type="entry name" value="RimM"/>
    <property type="match status" value="1"/>
</dbReference>
<dbReference type="HAMAP" id="MF_00014">
    <property type="entry name" value="Ribosome_mat_RimM"/>
    <property type="match status" value="1"/>
</dbReference>
<dbReference type="InterPro" id="IPR011033">
    <property type="entry name" value="PRC_barrel-like_sf"/>
</dbReference>
<dbReference type="InterPro" id="IPR056792">
    <property type="entry name" value="PRC_RimM"/>
</dbReference>
<dbReference type="InterPro" id="IPR011961">
    <property type="entry name" value="RimM"/>
</dbReference>
<dbReference type="InterPro" id="IPR002676">
    <property type="entry name" value="RimM_N"/>
</dbReference>
<dbReference type="InterPro" id="IPR036976">
    <property type="entry name" value="RimM_N_sf"/>
</dbReference>
<dbReference type="InterPro" id="IPR009000">
    <property type="entry name" value="Transl_B-barrel_sf"/>
</dbReference>
<dbReference type="NCBIfam" id="TIGR02273">
    <property type="entry name" value="16S_RimM"/>
    <property type="match status" value="1"/>
</dbReference>
<dbReference type="PANTHER" id="PTHR33692">
    <property type="entry name" value="RIBOSOME MATURATION FACTOR RIMM"/>
    <property type="match status" value="1"/>
</dbReference>
<dbReference type="PANTHER" id="PTHR33692:SF1">
    <property type="entry name" value="RIBOSOME MATURATION FACTOR RIMM"/>
    <property type="match status" value="1"/>
</dbReference>
<dbReference type="Pfam" id="PF24986">
    <property type="entry name" value="PRC_RimM"/>
    <property type="match status" value="1"/>
</dbReference>
<dbReference type="Pfam" id="PF01782">
    <property type="entry name" value="RimM"/>
    <property type="match status" value="1"/>
</dbReference>
<dbReference type="SUPFAM" id="SSF50346">
    <property type="entry name" value="PRC-barrel domain"/>
    <property type="match status" value="1"/>
</dbReference>
<dbReference type="SUPFAM" id="SSF50447">
    <property type="entry name" value="Translation proteins"/>
    <property type="match status" value="1"/>
</dbReference>
<protein>
    <recommendedName>
        <fullName evidence="1">Ribosome maturation factor RimM</fullName>
    </recommendedName>
</protein>
<comment type="function">
    <text evidence="1">An accessory protein needed during the final step in the assembly of 30S ribosomal subunit, possibly for assembly of the head region. Essential for efficient processing of 16S rRNA. May be needed both before and after RbfA during the maturation of 16S rRNA. It has affinity for free ribosomal 30S subunits but not for 70S ribosomes.</text>
</comment>
<comment type="subunit">
    <text evidence="1">Binds ribosomal protein uS19.</text>
</comment>
<comment type="subcellular location">
    <subcellularLocation>
        <location evidence="1">Cytoplasm</location>
    </subcellularLocation>
</comment>
<comment type="domain">
    <text evidence="1">The PRC barrel domain binds ribosomal protein uS19.</text>
</comment>
<comment type="similarity">
    <text evidence="1">Belongs to the RimM family.</text>
</comment>
<gene>
    <name evidence="1" type="primary">rimM</name>
    <name type="ordered locus">Nwi_2781</name>
</gene>
<accession>Q3SNV7</accession>
<name>RIMM_NITWN</name>
<evidence type="ECO:0000255" key="1">
    <source>
        <dbReference type="HAMAP-Rule" id="MF_00014"/>
    </source>
</evidence>